<comment type="function">
    <text evidence="1">Functions in complex with FlhC as a master transcriptional regulator that regulates transcription of several flagellar and non-flagellar operons by binding to their promoter region. Activates expression of class 2 flagellar genes, including fliA, which is a flagellum-specific sigma factor that turns on the class 3 genes. Also regulates genes whose products function in a variety of physiological pathways.</text>
</comment>
<comment type="subunit">
    <text evidence="1">Homodimer; disulfide-linked. Forms a heterohexamer composed of two FlhC and four FlhD subunits. Each FlhC binds a FlhD dimer, forming a heterotrimer, and a hexamer assembles by dimerization of two heterotrimers.</text>
</comment>
<comment type="subcellular location">
    <subcellularLocation>
        <location evidence="1">Cytoplasm</location>
    </subcellularLocation>
</comment>
<comment type="domain">
    <text evidence="1">The C-terminal region contains a putative helix-turn-helix (HTH) motif, suggesting that this region may bind DNA.</text>
</comment>
<comment type="similarity">
    <text evidence="1">Belongs to the FlhD family.</text>
</comment>
<reference key="1">
    <citation type="journal article" date="2009" name="PLoS Genet.">
        <title>Organised genome dynamics in the Escherichia coli species results in highly diverse adaptive paths.</title>
        <authorList>
            <person name="Touchon M."/>
            <person name="Hoede C."/>
            <person name="Tenaillon O."/>
            <person name="Barbe V."/>
            <person name="Baeriswyl S."/>
            <person name="Bidet P."/>
            <person name="Bingen E."/>
            <person name="Bonacorsi S."/>
            <person name="Bouchier C."/>
            <person name="Bouvet O."/>
            <person name="Calteau A."/>
            <person name="Chiapello H."/>
            <person name="Clermont O."/>
            <person name="Cruveiller S."/>
            <person name="Danchin A."/>
            <person name="Diard M."/>
            <person name="Dossat C."/>
            <person name="Karoui M.E."/>
            <person name="Frapy E."/>
            <person name="Garry L."/>
            <person name="Ghigo J.M."/>
            <person name="Gilles A.M."/>
            <person name="Johnson J."/>
            <person name="Le Bouguenec C."/>
            <person name="Lescat M."/>
            <person name="Mangenot S."/>
            <person name="Martinez-Jehanne V."/>
            <person name="Matic I."/>
            <person name="Nassif X."/>
            <person name="Oztas S."/>
            <person name="Petit M.A."/>
            <person name="Pichon C."/>
            <person name="Rouy Z."/>
            <person name="Ruf C.S."/>
            <person name="Schneider D."/>
            <person name="Tourret J."/>
            <person name="Vacherie B."/>
            <person name="Vallenet D."/>
            <person name="Medigue C."/>
            <person name="Rocha E.P.C."/>
            <person name="Denamur E."/>
        </authorList>
    </citation>
    <scope>NUCLEOTIDE SEQUENCE [LARGE SCALE GENOMIC DNA]</scope>
    <source>
        <strain>S88 / ExPEC</strain>
    </source>
</reference>
<gene>
    <name evidence="1" type="primary">flhD</name>
    <name type="ordered locus">ECS88_1949</name>
</gene>
<accession>B7MCF4</accession>
<organism>
    <name type="scientific">Escherichia coli O45:K1 (strain S88 / ExPEC)</name>
    <dbReference type="NCBI Taxonomy" id="585035"/>
    <lineage>
        <taxon>Bacteria</taxon>
        <taxon>Pseudomonadati</taxon>
        <taxon>Pseudomonadota</taxon>
        <taxon>Gammaproteobacteria</taxon>
        <taxon>Enterobacterales</taxon>
        <taxon>Enterobacteriaceae</taxon>
        <taxon>Escherichia</taxon>
    </lineage>
</organism>
<name>FLHD_ECO45</name>
<proteinExistence type="inferred from homology"/>
<keyword id="KW-0010">Activator</keyword>
<keyword id="KW-1005">Bacterial flagellum biogenesis</keyword>
<keyword id="KW-0963">Cytoplasm</keyword>
<keyword id="KW-1015">Disulfide bond</keyword>
<keyword id="KW-0238">DNA-binding</keyword>
<keyword id="KW-1185">Reference proteome</keyword>
<keyword id="KW-0804">Transcription</keyword>
<keyword id="KW-0805">Transcription regulation</keyword>
<feature type="chain" id="PRO_1000132679" description="Flagellar transcriptional regulator FlhD">
    <location>
        <begin position="1"/>
        <end position="119"/>
    </location>
</feature>
<feature type="disulfide bond" description="Interchain" evidence="1">
    <location>
        <position position="68"/>
    </location>
</feature>
<protein>
    <recommendedName>
        <fullName evidence="1">Flagellar transcriptional regulator FlhD</fullName>
    </recommendedName>
</protein>
<evidence type="ECO:0000255" key="1">
    <source>
        <dbReference type="HAMAP-Rule" id="MF_00725"/>
    </source>
</evidence>
<sequence length="119" mass="13618">MGIMHTSELLKHIYDINLSYLLLAQRLIVQDKASAMFRLGINEEMATTLAALTLPQMVKLAETNQLVCHFRFDSHQTITQLTQDSRVDDLQQIHTGIMLSTRLLNDVNQPEEALRKKRA</sequence>
<dbReference type="EMBL" id="CU928161">
    <property type="protein sequence ID" value="CAR03251.1"/>
    <property type="molecule type" value="Genomic_DNA"/>
</dbReference>
<dbReference type="SMR" id="B7MCF4"/>
<dbReference type="KEGG" id="ecz:ECS88_1949"/>
<dbReference type="HOGENOM" id="CLU_144160_0_0_6"/>
<dbReference type="Proteomes" id="UP000000747">
    <property type="component" value="Chromosome"/>
</dbReference>
<dbReference type="GO" id="GO:0005737">
    <property type="term" value="C:cytoplasm"/>
    <property type="evidence" value="ECO:0007669"/>
    <property type="project" value="UniProtKB-SubCell"/>
</dbReference>
<dbReference type="GO" id="GO:0003677">
    <property type="term" value="F:DNA binding"/>
    <property type="evidence" value="ECO:0007669"/>
    <property type="project" value="UniProtKB-UniRule"/>
</dbReference>
<dbReference type="GO" id="GO:0044780">
    <property type="term" value="P:bacterial-type flagellum assembly"/>
    <property type="evidence" value="ECO:0007669"/>
    <property type="project" value="InterPro"/>
</dbReference>
<dbReference type="GO" id="GO:0045893">
    <property type="term" value="P:positive regulation of DNA-templated transcription"/>
    <property type="evidence" value="ECO:0007669"/>
    <property type="project" value="InterPro"/>
</dbReference>
<dbReference type="GO" id="GO:1902208">
    <property type="term" value="P:regulation of bacterial-type flagellum assembly"/>
    <property type="evidence" value="ECO:0007669"/>
    <property type="project" value="UniProtKB-UniRule"/>
</dbReference>
<dbReference type="FunFam" id="1.10.4000.10:FF:000001">
    <property type="entry name" value="Flagellar transcriptional regulator FlhD"/>
    <property type="match status" value="1"/>
</dbReference>
<dbReference type="Gene3D" id="1.10.4000.10">
    <property type="entry name" value="Flagellar transcriptional activator FlhD"/>
    <property type="match status" value="1"/>
</dbReference>
<dbReference type="HAMAP" id="MF_00725">
    <property type="entry name" value="FlhD"/>
    <property type="match status" value="1"/>
</dbReference>
<dbReference type="InterPro" id="IPR023559">
    <property type="entry name" value="Flagellar_FlhD"/>
</dbReference>
<dbReference type="InterPro" id="IPR036194">
    <property type="entry name" value="FlhD_sf"/>
</dbReference>
<dbReference type="NCBIfam" id="NF002783">
    <property type="entry name" value="PRK02909.1-1"/>
    <property type="match status" value="1"/>
</dbReference>
<dbReference type="Pfam" id="PF05247">
    <property type="entry name" value="FlhD"/>
    <property type="match status" value="1"/>
</dbReference>
<dbReference type="SUPFAM" id="SSF63592">
    <property type="entry name" value="Flagellar transcriptional activator FlhD"/>
    <property type="match status" value="1"/>
</dbReference>